<sequence>MEPNNHHDGLNGQKADNPLEVAIVGGGLTGLALALGLLRRNVNFTIYERAASFGELGVGIHFTPNAERAMKALDPRILQSYVDVATHAEGGFLSFVDGLHDDDLLFQLRMGEGYKAARRCDIVSQLVKHIPQERVQLLKWLQSVEEDAEGRAVLTFRDGSTAKADVVVGCDGIRSQVRSAMFGSGPSAPRAQYAHQLAFRGLVPMAKVAATLGPEKTSRAIGYLGPGGFVLSVPLAGINMMHLEVFVMDPLPWSDDTTGSKPDKDKDEDDVKRYVLPSTRAEAEKAFTEFNPTVRSLISLLPEELGKWAIFDMLDSPAPSYALGRMCLAGDAAHASTPNQGGGAGAGMEDSLVLAEILAALADRAKSGARVGSWEISEGLKIYSDARYERAQWLVQSSRRVAQLFTRKKGAGQGGEEEEPISREILERSHQLWDYDVDAAVEEALGKLRAKVLEKH</sequence>
<keyword id="KW-0274">FAD</keyword>
<keyword id="KW-0285">Flavoprotein</keyword>
<keyword id="KW-0325">Glycoprotein</keyword>
<keyword id="KW-0472">Membrane</keyword>
<keyword id="KW-0503">Monooxygenase</keyword>
<keyword id="KW-0560">Oxidoreductase</keyword>
<keyword id="KW-1185">Reference proteome</keyword>
<keyword id="KW-0812">Transmembrane</keyword>
<keyword id="KW-1133">Transmembrane helix</keyword>
<comment type="function">
    <text evidence="1 5 6">FAD-dependent monooxygenase; part of the SOR gene cluster that mediates the biosynthesis of sorbicillinoids, a diverse group of yellow secondary metabolites that restrict growth of competing pathogenic fungi but not of bacteria (PubMed:29104566). Sorbicillinoids biosynthesis requires the action of two PKSs (PubMed:28809958). The SOR cluster is required for the production of trichodimerol and dihydrotrichotetronin, with sor2 being sufficient for production of trichodimerol, but not dihydrotrichotetronin in the light (PubMed:28809958). Sor1 iteratively combines three acetyl units and the growing chain is modified by the ketoacyl reductase subunit, and optional by the enoyl reductase subunit in the second cycle (By similarity). The polyketide is then handed over to the PKS sor2, which adds three more acetyl units, and two methyl groups (By similarity). Sor2 releases an aldehyde, which undergoes spontaneous cyclization resulting in the formation of sorbicillin or 2',3'-dihydrosorbicillin (By similarity). The monooxygenase sor5 oxidizes sorbicillin and 2',3'-dihydrosorbicillin to 2',3'-dihydrosorbicillinol and sorbicillinol, respectively (PubMed:29104566). The oxidoreductase sor8 further converts sorbicillinol into oxosorbicillinol (PubMed:29104566). Sorbicillinol is the building block for the other sorbicillinoids such as disorbicillinol, bisvertinolon, dihydrobisvertinolone, and dihydrotrichotetronine (PubMed:28809958, PubMed:29104566).</text>
</comment>
<comment type="cofactor">
    <cofactor evidence="9">
        <name>FAD</name>
        <dbReference type="ChEBI" id="CHEBI:57692"/>
    </cofactor>
</comment>
<comment type="pathway">
    <text evidence="5">Secondary metabolite biosynthesis.</text>
</comment>
<comment type="subcellular location">
    <subcellularLocation>
        <location evidence="3">Membrane</location>
        <topology evidence="3">Single-pass membrane protein</topology>
    </subcellularLocation>
</comment>
<comment type="induction">
    <text evidence="5">The promoter contains putative CRE1 binding motifs 5'-SYGGRG-3' and expression is differentially regulated in light and darkness by CRE1 (PubMed:28809958). Photoreceptors BLR1 and BLR2 negatively regulate the expression, while ENV1 exerts positive regulation (PubMed:28809958). Moreover the SOR biosynthetic genes show a mechanism of positive feedback on each other in darkness (PubMed:28809958).</text>
</comment>
<comment type="disruption phenotype">
    <text evidence="5 6">Leads to the production of only traces of sorbicillinol, probably resulting of chemical conversions and not of enzymatic activity (PubMed:29104566). Abolishes production of trichodimerol and dihydrotrichotetronin in darkness (PubMed:28809958). Also impacts production of paracelsin in a light dependent manner, with decreased paracelsin levels in light, but likely in an indirect way (PubMed:28809958).</text>
</comment>
<comment type="similarity">
    <text evidence="9">Belongs to the paxM FAD-dependent monooxygenase family.</text>
</comment>
<gene>
    <name evidence="7" type="primary">sor5</name>
    <name evidence="8" type="synonym">sor3</name>
    <name type="ORF">TRIREDRAFT_73623</name>
</gene>
<feature type="chain" id="PRO_0000443846" description="FAD-dependent monooxygenase sor5">
    <location>
        <begin position="1"/>
        <end position="456"/>
    </location>
</feature>
<feature type="transmembrane region" description="Helical" evidence="3">
    <location>
        <begin position="18"/>
        <end position="38"/>
    </location>
</feature>
<feature type="active site" evidence="2">
    <location>
        <position position="200"/>
    </location>
</feature>
<feature type="binding site" evidence="2">
    <location>
        <position position="48"/>
    </location>
    <ligand>
        <name>FAD</name>
        <dbReference type="ChEBI" id="CHEBI:57692"/>
    </ligand>
</feature>
<feature type="binding site" evidence="2">
    <location>
        <position position="119"/>
    </location>
    <ligand>
        <name>FAD</name>
        <dbReference type="ChEBI" id="CHEBI:57692"/>
    </ligand>
</feature>
<feature type="binding site" evidence="2">
    <location>
        <position position="331"/>
    </location>
    <ligand>
        <name>FAD</name>
        <dbReference type="ChEBI" id="CHEBI:57692"/>
    </ligand>
</feature>
<feature type="binding site" evidence="2">
    <location>
        <position position="344"/>
    </location>
    <ligand>
        <name>FAD</name>
        <dbReference type="ChEBI" id="CHEBI:57692"/>
    </ligand>
</feature>
<feature type="glycosylation site" description="N-linked (GlcNAc...) asparagine" evidence="4">
    <location>
        <position position="43"/>
    </location>
</feature>
<accession>G0R6T0</accession>
<dbReference type="EC" id="1.-.-.-" evidence="10"/>
<dbReference type="EMBL" id="GL985056">
    <property type="protein sequence ID" value="EGR52183.1"/>
    <property type="molecule type" value="Genomic_DNA"/>
</dbReference>
<dbReference type="RefSeq" id="XP_006961157.1">
    <property type="nucleotide sequence ID" value="XM_006961095.1"/>
</dbReference>
<dbReference type="SMR" id="G0R6T0"/>
<dbReference type="STRING" id="431241.G0R6T0"/>
<dbReference type="GlyCosmos" id="G0R6T0">
    <property type="glycosylation" value="1 site, No reported glycans"/>
</dbReference>
<dbReference type="EnsemblFungi" id="EGR52183">
    <property type="protein sequence ID" value="EGR52183"/>
    <property type="gene ID" value="TRIREDRAFT_73623"/>
</dbReference>
<dbReference type="GeneID" id="18488221"/>
<dbReference type="KEGG" id="tre:TRIREDRAFT_73623"/>
<dbReference type="VEuPathDB" id="FungiDB:TRIREDRAFT_73623"/>
<dbReference type="eggNOG" id="KOG2614">
    <property type="taxonomic scope" value="Eukaryota"/>
</dbReference>
<dbReference type="HOGENOM" id="CLU_009665_6_3_1"/>
<dbReference type="OrthoDB" id="417877at2759"/>
<dbReference type="Proteomes" id="UP000008984">
    <property type="component" value="Unassembled WGS sequence"/>
</dbReference>
<dbReference type="GO" id="GO:0016020">
    <property type="term" value="C:membrane"/>
    <property type="evidence" value="ECO:0007669"/>
    <property type="project" value="UniProtKB-SubCell"/>
</dbReference>
<dbReference type="GO" id="GO:0071949">
    <property type="term" value="F:FAD binding"/>
    <property type="evidence" value="ECO:0007669"/>
    <property type="project" value="InterPro"/>
</dbReference>
<dbReference type="GO" id="GO:0004497">
    <property type="term" value="F:monooxygenase activity"/>
    <property type="evidence" value="ECO:0007669"/>
    <property type="project" value="UniProtKB-KW"/>
</dbReference>
<dbReference type="GO" id="GO:0044550">
    <property type="term" value="P:secondary metabolite biosynthetic process"/>
    <property type="evidence" value="ECO:0007669"/>
    <property type="project" value="TreeGrafter"/>
</dbReference>
<dbReference type="Gene3D" id="3.50.50.60">
    <property type="entry name" value="FAD/NAD(P)-binding domain"/>
    <property type="match status" value="1"/>
</dbReference>
<dbReference type="InterPro" id="IPR002938">
    <property type="entry name" value="FAD-bd"/>
</dbReference>
<dbReference type="InterPro" id="IPR036188">
    <property type="entry name" value="FAD/NAD-bd_sf"/>
</dbReference>
<dbReference type="InterPro" id="IPR051104">
    <property type="entry name" value="FAD_monoxygenase"/>
</dbReference>
<dbReference type="PANTHER" id="PTHR46720:SF3">
    <property type="entry name" value="FAD-BINDING DOMAIN-CONTAINING PROTEIN-RELATED"/>
    <property type="match status" value="1"/>
</dbReference>
<dbReference type="PANTHER" id="PTHR46720">
    <property type="entry name" value="HYDROXYLASE, PUTATIVE (AFU_ORTHOLOGUE AFUA_3G01460)-RELATED"/>
    <property type="match status" value="1"/>
</dbReference>
<dbReference type="Pfam" id="PF01494">
    <property type="entry name" value="FAD_binding_3"/>
    <property type="match status" value="1"/>
</dbReference>
<dbReference type="PRINTS" id="PR00420">
    <property type="entry name" value="RNGMNOXGNASE"/>
</dbReference>
<dbReference type="SUPFAM" id="SSF51905">
    <property type="entry name" value="FAD/NAD(P)-binding domain"/>
    <property type="match status" value="1"/>
</dbReference>
<evidence type="ECO:0000250" key="1">
    <source>
        <dbReference type="UniProtKB" id="B6HNK3"/>
    </source>
</evidence>
<evidence type="ECO:0000250" key="2">
    <source>
        <dbReference type="UniProtKB" id="B8M9J8"/>
    </source>
</evidence>
<evidence type="ECO:0000255" key="3"/>
<evidence type="ECO:0000255" key="4">
    <source>
        <dbReference type="PROSITE-ProRule" id="PRU00498"/>
    </source>
</evidence>
<evidence type="ECO:0000269" key="5">
    <source>
    </source>
</evidence>
<evidence type="ECO:0000269" key="6">
    <source>
    </source>
</evidence>
<evidence type="ECO:0000303" key="7">
    <source>
    </source>
</evidence>
<evidence type="ECO:0000303" key="8">
    <source>
    </source>
</evidence>
<evidence type="ECO:0000305" key="9"/>
<evidence type="ECO:0000305" key="10">
    <source>
    </source>
</evidence>
<proteinExistence type="evidence at transcript level"/>
<organism>
    <name type="scientific">Hypocrea jecorina (strain QM6a)</name>
    <name type="common">Trichoderma reesei</name>
    <dbReference type="NCBI Taxonomy" id="431241"/>
    <lineage>
        <taxon>Eukaryota</taxon>
        <taxon>Fungi</taxon>
        <taxon>Dikarya</taxon>
        <taxon>Ascomycota</taxon>
        <taxon>Pezizomycotina</taxon>
        <taxon>Sordariomycetes</taxon>
        <taxon>Hypocreomycetidae</taxon>
        <taxon>Hypocreales</taxon>
        <taxon>Hypocreaceae</taxon>
        <taxon>Trichoderma</taxon>
    </lineage>
</organism>
<protein>
    <recommendedName>
        <fullName evidence="7">FAD-dependent monooxygenase sor5</fullName>
        <ecNumber evidence="10">1.-.-.-</ecNumber>
    </recommendedName>
    <alternativeName>
        <fullName evidence="7">Sorbicillinoid biosynthetic cluster protein 5</fullName>
    </alternativeName>
</protein>
<reference key="1">
    <citation type="journal article" date="2008" name="Nat. Biotechnol.">
        <title>Genome sequencing and analysis of the biomass-degrading fungus Trichoderma reesei (syn. Hypocrea jecorina).</title>
        <authorList>
            <person name="Martinez D."/>
            <person name="Berka R.M."/>
            <person name="Henrissat B."/>
            <person name="Saloheimo M."/>
            <person name="Arvas M."/>
            <person name="Baker S.E."/>
            <person name="Chapman J."/>
            <person name="Chertkov O."/>
            <person name="Coutinho P.M."/>
            <person name="Cullen D."/>
            <person name="Danchin E.G."/>
            <person name="Grigoriev I.V."/>
            <person name="Harris P."/>
            <person name="Jackson M."/>
            <person name="Kubicek C.P."/>
            <person name="Han C.S."/>
            <person name="Ho I."/>
            <person name="Larrondo L.F."/>
            <person name="de Leon A.L."/>
            <person name="Magnuson J.K."/>
            <person name="Merino S."/>
            <person name="Misra M."/>
            <person name="Nelson B."/>
            <person name="Putnam N."/>
            <person name="Robbertse B."/>
            <person name="Salamov A.A."/>
            <person name="Schmoll M."/>
            <person name="Terry A."/>
            <person name="Thayer N."/>
            <person name="Westerholm-Parvinen A."/>
            <person name="Schoch C.L."/>
            <person name="Yao J."/>
            <person name="Barabote R."/>
            <person name="Nelson M.A."/>
            <person name="Detter C."/>
            <person name="Bruce D."/>
            <person name="Kuske C.R."/>
            <person name="Xie G."/>
            <person name="Richardson P."/>
            <person name="Rokhsar D.S."/>
            <person name="Lucas S.M."/>
            <person name="Rubin E.M."/>
            <person name="Dunn-Coleman N."/>
            <person name="Ward M."/>
            <person name="Brettin T.S."/>
        </authorList>
    </citation>
    <scope>NUCLEOTIDE SEQUENCE [LARGE SCALE GENOMIC DNA]</scope>
    <source>
        <strain>QM6a</strain>
    </source>
</reference>
<reference key="2">
    <citation type="journal article" date="2016" name="BMC Evol. Biol.">
        <title>Several steps of lateral gene transfer followed by events of 'birth-and-death' evolution shaped a fungal sorbicillinoid biosynthetic gene cluster.</title>
        <authorList>
            <person name="Druzhinina I.S."/>
            <person name="Kubicek E.M."/>
            <person name="Kubicek C.P."/>
        </authorList>
    </citation>
    <scope>IDENTIFICATION</scope>
</reference>
<reference key="3">
    <citation type="journal article" date="2017" name="Front. Microbiol.">
        <title>In vivo study of the sorbicillinoid gene cluster in Trichoderma reesei.</title>
        <authorList>
            <person name="Derntl C."/>
            <person name="Guzman-Chavez F."/>
            <person name="Mello-de-Sousa T.M."/>
            <person name="Busse H.J."/>
            <person name="Driessen A.J.M."/>
            <person name="Mach R.L."/>
            <person name="Mach-Aigner A.R."/>
        </authorList>
    </citation>
    <scope>FUNCTION</scope>
    <scope>DISRUPTION PHENOTYPE</scope>
</reference>
<reference key="4">
    <citation type="journal article" date="2017" name="PLoS ONE">
        <title>A CRE1-regulated cluster is responsible for light dependent production of dihydrotrichotetronin in Trichoderma reesei.</title>
        <authorList>
            <person name="Monroy A.A."/>
            <person name="Stappler E."/>
            <person name="Schuster A."/>
            <person name="Sulyok M."/>
            <person name="Schmoll M."/>
        </authorList>
    </citation>
    <scope>FUNCTION</scope>
    <scope>INDUCTION</scope>
    <scope>DISRUPTION PHENOTYPE</scope>
    <scope>PATHWAY</scope>
</reference>
<name>SORC_HYPJQ</name>